<dbReference type="EC" id="1.1.1.37"/>
<dbReference type="EMBL" id="BC060386">
    <property type="protein sequence ID" value="AAH60386.1"/>
    <property type="molecule type" value="mRNA"/>
</dbReference>
<dbReference type="RefSeq" id="NP_001083335.1">
    <property type="nucleotide sequence ID" value="NM_001089866.1"/>
</dbReference>
<dbReference type="SMR" id="Q6PAB3"/>
<dbReference type="BioGRID" id="100200">
    <property type="interactions" value="1"/>
</dbReference>
<dbReference type="DNASU" id="398872"/>
<dbReference type="GeneID" id="398872"/>
<dbReference type="KEGG" id="xla:398872"/>
<dbReference type="AGR" id="Xenbase:XB-GENE-865511"/>
<dbReference type="CTD" id="398872"/>
<dbReference type="Xenbase" id="XB-GENE-865511">
    <property type="gene designation" value="mdh1.S"/>
</dbReference>
<dbReference type="OMA" id="HTWVNGT"/>
<dbReference type="OrthoDB" id="4069699at2759"/>
<dbReference type="Proteomes" id="UP000186698">
    <property type="component" value="Chromosome 5S"/>
</dbReference>
<dbReference type="Bgee" id="398872">
    <property type="expression patterns" value="Expressed in kidney and 19 other cell types or tissues"/>
</dbReference>
<dbReference type="GO" id="GO:0005829">
    <property type="term" value="C:cytosol"/>
    <property type="evidence" value="ECO:0000318"/>
    <property type="project" value="GO_Central"/>
</dbReference>
<dbReference type="GO" id="GO:0030060">
    <property type="term" value="F:L-malate dehydrogenase (NAD+) activity"/>
    <property type="evidence" value="ECO:0000318"/>
    <property type="project" value="GO_Central"/>
</dbReference>
<dbReference type="GO" id="GO:0006108">
    <property type="term" value="P:malate metabolic process"/>
    <property type="evidence" value="ECO:0000318"/>
    <property type="project" value="GO_Central"/>
</dbReference>
<dbReference type="GO" id="GO:0006734">
    <property type="term" value="P:NADH metabolic process"/>
    <property type="evidence" value="ECO:0000318"/>
    <property type="project" value="GO_Central"/>
</dbReference>
<dbReference type="GO" id="GO:0006107">
    <property type="term" value="P:oxaloacetate metabolic process"/>
    <property type="evidence" value="ECO:0000318"/>
    <property type="project" value="GO_Central"/>
</dbReference>
<dbReference type="GO" id="GO:0006099">
    <property type="term" value="P:tricarboxylic acid cycle"/>
    <property type="evidence" value="ECO:0000318"/>
    <property type="project" value="GO_Central"/>
</dbReference>
<dbReference type="CDD" id="cd01336">
    <property type="entry name" value="MDH_cytoplasmic_cytosolic"/>
    <property type="match status" value="1"/>
</dbReference>
<dbReference type="FunFam" id="3.40.50.720:FF:000010">
    <property type="entry name" value="Malate dehydrogenase"/>
    <property type="match status" value="1"/>
</dbReference>
<dbReference type="FunFam" id="3.90.110.10:FF:000002">
    <property type="entry name" value="Malate dehydrogenase"/>
    <property type="match status" value="1"/>
</dbReference>
<dbReference type="Gene3D" id="3.90.110.10">
    <property type="entry name" value="Lactate dehydrogenase/glycoside hydrolase, family 4, C-terminal"/>
    <property type="match status" value="1"/>
</dbReference>
<dbReference type="Gene3D" id="3.40.50.720">
    <property type="entry name" value="NAD(P)-binding Rossmann-like Domain"/>
    <property type="match status" value="1"/>
</dbReference>
<dbReference type="HAMAP" id="MF_01517">
    <property type="entry name" value="Malate_dehydrog_2"/>
    <property type="match status" value="1"/>
</dbReference>
<dbReference type="InterPro" id="IPR001557">
    <property type="entry name" value="L-lactate/malate_DH"/>
</dbReference>
<dbReference type="InterPro" id="IPR022383">
    <property type="entry name" value="Lactate/malate_DH_C"/>
</dbReference>
<dbReference type="InterPro" id="IPR001236">
    <property type="entry name" value="Lactate/malate_DH_N"/>
</dbReference>
<dbReference type="InterPro" id="IPR015955">
    <property type="entry name" value="Lactate_DH/Glyco_Ohase_4_C"/>
</dbReference>
<dbReference type="InterPro" id="IPR001252">
    <property type="entry name" value="Malate_DH_AS"/>
</dbReference>
<dbReference type="InterPro" id="IPR011274">
    <property type="entry name" value="Malate_DH_NAD-dep_euk"/>
</dbReference>
<dbReference type="InterPro" id="IPR010945">
    <property type="entry name" value="Malate_DH_type2"/>
</dbReference>
<dbReference type="InterPro" id="IPR036291">
    <property type="entry name" value="NAD(P)-bd_dom_sf"/>
</dbReference>
<dbReference type="NCBIfam" id="TIGR01759">
    <property type="entry name" value="MalateDH-SF1"/>
    <property type="match status" value="1"/>
</dbReference>
<dbReference type="NCBIfam" id="TIGR01758">
    <property type="entry name" value="MDH_euk_cyt"/>
    <property type="match status" value="1"/>
</dbReference>
<dbReference type="NCBIfam" id="NF003916">
    <property type="entry name" value="PRK05442.1"/>
    <property type="match status" value="1"/>
</dbReference>
<dbReference type="PANTHER" id="PTHR23382">
    <property type="entry name" value="MALATE DEHYDROGENASE"/>
    <property type="match status" value="1"/>
</dbReference>
<dbReference type="Pfam" id="PF02866">
    <property type="entry name" value="Ldh_1_C"/>
    <property type="match status" value="1"/>
</dbReference>
<dbReference type="Pfam" id="PF00056">
    <property type="entry name" value="Ldh_1_N"/>
    <property type="match status" value="1"/>
</dbReference>
<dbReference type="PIRSF" id="PIRSF000102">
    <property type="entry name" value="Lac_mal_DH"/>
    <property type="match status" value="1"/>
</dbReference>
<dbReference type="SUPFAM" id="SSF56327">
    <property type="entry name" value="LDH C-terminal domain-like"/>
    <property type="match status" value="1"/>
</dbReference>
<dbReference type="SUPFAM" id="SSF51735">
    <property type="entry name" value="NAD(P)-binding Rossmann-fold domains"/>
    <property type="match status" value="1"/>
</dbReference>
<dbReference type="PROSITE" id="PS00068">
    <property type="entry name" value="MDH"/>
    <property type="match status" value="1"/>
</dbReference>
<gene>
    <name type="primary">mdh1</name>
</gene>
<keyword id="KW-0963">Cytoplasm</keyword>
<keyword id="KW-0520">NAD</keyword>
<keyword id="KW-0560">Oxidoreductase</keyword>
<keyword id="KW-1185">Reference proteome</keyword>
<keyword id="KW-0816">Tricarboxylic acid cycle</keyword>
<protein>
    <recommendedName>
        <fullName>Malate dehydrogenase, cytoplasmic</fullName>
        <ecNumber>1.1.1.37</ecNumber>
    </recommendedName>
    <alternativeName>
        <fullName>Cytosolic malate dehydrogenase</fullName>
    </alternativeName>
</protein>
<accession>Q6PAB3</accession>
<organism>
    <name type="scientific">Xenopus laevis</name>
    <name type="common">African clawed frog</name>
    <dbReference type="NCBI Taxonomy" id="8355"/>
    <lineage>
        <taxon>Eukaryota</taxon>
        <taxon>Metazoa</taxon>
        <taxon>Chordata</taxon>
        <taxon>Craniata</taxon>
        <taxon>Vertebrata</taxon>
        <taxon>Euteleostomi</taxon>
        <taxon>Amphibia</taxon>
        <taxon>Batrachia</taxon>
        <taxon>Anura</taxon>
        <taxon>Pipoidea</taxon>
        <taxon>Pipidae</taxon>
        <taxon>Xenopodinae</taxon>
        <taxon>Xenopus</taxon>
        <taxon>Xenopus</taxon>
    </lineage>
</organism>
<name>MDHC_XENLA</name>
<evidence type="ECO:0000250" key="1"/>
<evidence type="ECO:0000250" key="2">
    <source>
        <dbReference type="UniProtKB" id="P11708"/>
    </source>
</evidence>
<evidence type="ECO:0000250" key="3">
    <source>
        <dbReference type="UniProtKB" id="P40925"/>
    </source>
</evidence>
<evidence type="ECO:0000305" key="4"/>
<feature type="chain" id="PRO_0000226739" description="Malate dehydrogenase, cytoplasmic">
    <location>
        <begin position="1"/>
        <end position="334"/>
    </location>
</feature>
<feature type="active site" description="Proton acceptor" evidence="1">
    <location>
        <position position="187"/>
    </location>
</feature>
<feature type="binding site" evidence="1">
    <location>
        <begin position="11"/>
        <end position="17"/>
    </location>
    <ligand>
        <name>NAD(+)</name>
        <dbReference type="ChEBI" id="CHEBI:57540"/>
    </ligand>
</feature>
<feature type="binding site" evidence="1">
    <location>
        <position position="92"/>
    </location>
    <ligand>
        <name>substrate</name>
    </ligand>
</feature>
<feature type="binding site" evidence="1">
    <location>
        <position position="98"/>
    </location>
    <ligand>
        <name>substrate</name>
    </ligand>
</feature>
<feature type="binding site" evidence="1">
    <location>
        <position position="105"/>
    </location>
    <ligand>
        <name>NAD(+)</name>
        <dbReference type="ChEBI" id="CHEBI:57540"/>
    </ligand>
</feature>
<feature type="binding site" evidence="1">
    <location>
        <position position="112"/>
    </location>
    <ligand>
        <name>NAD(+)</name>
        <dbReference type="ChEBI" id="CHEBI:57540"/>
    </ligand>
</feature>
<feature type="binding site" evidence="1">
    <location>
        <begin position="129"/>
        <end position="131"/>
    </location>
    <ligand>
        <name>NAD(+)</name>
        <dbReference type="ChEBI" id="CHEBI:57540"/>
    </ligand>
</feature>
<feature type="binding site" evidence="1">
    <location>
        <position position="131"/>
    </location>
    <ligand>
        <name>substrate</name>
    </ligand>
</feature>
<feature type="binding site" evidence="1">
    <location>
        <position position="162"/>
    </location>
    <ligand>
        <name>substrate</name>
    </ligand>
</feature>
<proteinExistence type="evidence at transcript level"/>
<comment type="function">
    <text evidence="3">Catalyzes the reduction of aromatic alpha-keto acids in the presence of NADH. Plays essential roles in the malate-aspartate shuttle and the tricarboxylic acid cycle, important in mitochondrial NADH supply for oxidative phosphorylation. Catalyzes the reduction of 2-oxoglutarate to 2-hydroxyglutarate, leading to elevated reactive oxygen species (ROS).</text>
</comment>
<comment type="catalytic activity">
    <reaction>
        <text>(S)-malate + NAD(+) = oxaloacetate + NADH + H(+)</text>
        <dbReference type="Rhea" id="RHEA:21432"/>
        <dbReference type="ChEBI" id="CHEBI:15378"/>
        <dbReference type="ChEBI" id="CHEBI:15589"/>
        <dbReference type="ChEBI" id="CHEBI:16452"/>
        <dbReference type="ChEBI" id="CHEBI:57540"/>
        <dbReference type="ChEBI" id="CHEBI:57945"/>
        <dbReference type="EC" id="1.1.1.37"/>
    </reaction>
</comment>
<comment type="catalytic activity">
    <reaction evidence="3">
        <text>(S)-2-hydroxyglutarate + NAD(+) = 2-oxoglutarate + NADH + H(+)</text>
        <dbReference type="Rhea" id="RHEA:57172"/>
        <dbReference type="ChEBI" id="CHEBI:15378"/>
        <dbReference type="ChEBI" id="CHEBI:16782"/>
        <dbReference type="ChEBI" id="CHEBI:16810"/>
        <dbReference type="ChEBI" id="CHEBI:57540"/>
        <dbReference type="ChEBI" id="CHEBI:57945"/>
    </reaction>
    <physiologicalReaction direction="right-to-left" evidence="3">
        <dbReference type="Rhea" id="RHEA:57174"/>
    </physiologicalReaction>
</comment>
<comment type="subunit">
    <text evidence="2">Homodimer.</text>
</comment>
<comment type="subcellular location">
    <subcellularLocation>
        <location evidence="3">Cytoplasm</location>
        <location evidence="3">Cytosol</location>
    </subcellularLocation>
</comment>
<comment type="similarity">
    <text evidence="4">Belongs to the LDH/MDH superfamily. MDH type 2 family.</text>
</comment>
<reference key="1">
    <citation type="submission" date="2003-10" db="EMBL/GenBank/DDBJ databases">
        <authorList>
            <consortium name="NIH - Xenopus Gene Collection (XGC) project"/>
        </authorList>
    </citation>
    <scope>NUCLEOTIDE SEQUENCE [LARGE SCALE MRNA]</scope>
    <source>
        <tissue>Kidney</tissue>
    </source>
</reference>
<sequence length="334" mass="36425">MPEPVKVLVTGAAGQIAYSLLFGIAKGDVFGKDQPLILVLLDITPMMTVLEGVVMELQDCALPLLKEVIATDKEDVAFKDLDVAILVGSMPRREGMERKDLLKANVKIFKSQGAALNKYSKKSVKVIVVGNPANTNCLTALKSAPSIPKENFSCLTRLDHNRAKAQIALKLNVASDDVKNVIIWGNHSSTQYPDASHASVTLQGKDVGAFEAVKNDDWLKGGFITTVQQRGAAVIKARKLSSAMSAAKAICDHVRDIWFGTPEGQFVSMGVISDGNSYGVPEDLMYSFPLTIKNKTWKIVEGLCINDFSREKMDITAKELQDEKETAFEFLSSE</sequence>